<proteinExistence type="inferred from homology"/>
<feature type="chain" id="PRO_1000056499" description="ATP synthase epsilon chain">
    <location>
        <begin position="1"/>
        <end position="127"/>
    </location>
</feature>
<keyword id="KW-0066">ATP synthesis</keyword>
<keyword id="KW-0997">Cell inner membrane</keyword>
<keyword id="KW-1003">Cell membrane</keyword>
<keyword id="KW-0139">CF(1)</keyword>
<keyword id="KW-0375">Hydrogen ion transport</keyword>
<keyword id="KW-0406">Ion transport</keyword>
<keyword id="KW-0472">Membrane</keyword>
<keyword id="KW-0813">Transport</keyword>
<protein>
    <recommendedName>
        <fullName evidence="1">ATP synthase epsilon chain</fullName>
    </recommendedName>
    <alternativeName>
        <fullName evidence="1">ATP synthase F1 sector epsilon subunit</fullName>
    </alternativeName>
    <alternativeName>
        <fullName evidence="1">F-ATPase epsilon subunit</fullName>
    </alternativeName>
</protein>
<sequence length="127" mass="13760">MFAHKLNVSVISPEKILYKGEVDSLVVPGSEGFFGILPNHAPLVATLGIGVLEIRKGEKLKNISVEGGFIEVKDNTVSILTDHGALKEDIDIEAEKKALAEVEKLSPSDSKNLLLQKTKTRILVASR</sequence>
<reference key="1">
    <citation type="journal article" date="2006" name="Proc. Natl. Acad. Sci. U.S.A.">
        <title>Genome reduction in Leptospira borgpetersenii reflects limited transmission potential.</title>
        <authorList>
            <person name="Bulach D.M."/>
            <person name="Zuerner R.L."/>
            <person name="Wilson P."/>
            <person name="Seemann T."/>
            <person name="McGrath A."/>
            <person name="Cullen P.A."/>
            <person name="Davis J."/>
            <person name="Johnson M."/>
            <person name="Kuczek E."/>
            <person name="Alt D.P."/>
            <person name="Peterson-Burch B."/>
            <person name="Coppel R.L."/>
            <person name="Rood J.I."/>
            <person name="Davies J.K."/>
            <person name="Adler B."/>
        </authorList>
    </citation>
    <scope>NUCLEOTIDE SEQUENCE [LARGE SCALE GENOMIC DNA]</scope>
    <source>
        <strain>JB197</strain>
    </source>
</reference>
<dbReference type="EMBL" id="CP000350">
    <property type="protein sequence ID" value="ABJ76301.1"/>
    <property type="molecule type" value="Genomic_DNA"/>
</dbReference>
<dbReference type="RefSeq" id="WP_011670482.1">
    <property type="nucleotide sequence ID" value="NC_008510.1"/>
</dbReference>
<dbReference type="SMR" id="Q04S19"/>
<dbReference type="KEGG" id="lbj:LBJ_1751"/>
<dbReference type="HOGENOM" id="CLU_084338_2_1_12"/>
<dbReference type="Proteomes" id="UP000000656">
    <property type="component" value="Chromosome 1"/>
</dbReference>
<dbReference type="GO" id="GO:0005886">
    <property type="term" value="C:plasma membrane"/>
    <property type="evidence" value="ECO:0007669"/>
    <property type="project" value="UniProtKB-SubCell"/>
</dbReference>
<dbReference type="GO" id="GO:0045259">
    <property type="term" value="C:proton-transporting ATP synthase complex"/>
    <property type="evidence" value="ECO:0007669"/>
    <property type="project" value="UniProtKB-KW"/>
</dbReference>
<dbReference type="GO" id="GO:0005524">
    <property type="term" value="F:ATP binding"/>
    <property type="evidence" value="ECO:0007669"/>
    <property type="project" value="UniProtKB-UniRule"/>
</dbReference>
<dbReference type="GO" id="GO:0046933">
    <property type="term" value="F:proton-transporting ATP synthase activity, rotational mechanism"/>
    <property type="evidence" value="ECO:0007669"/>
    <property type="project" value="UniProtKB-UniRule"/>
</dbReference>
<dbReference type="CDD" id="cd12152">
    <property type="entry name" value="F1-ATPase_delta"/>
    <property type="match status" value="1"/>
</dbReference>
<dbReference type="Gene3D" id="2.60.15.10">
    <property type="entry name" value="F0F1 ATP synthase delta/epsilon subunit, N-terminal"/>
    <property type="match status" value="1"/>
</dbReference>
<dbReference type="HAMAP" id="MF_00530">
    <property type="entry name" value="ATP_synth_epsil_bac"/>
    <property type="match status" value="1"/>
</dbReference>
<dbReference type="InterPro" id="IPR001469">
    <property type="entry name" value="ATP_synth_F1_dsu/esu"/>
</dbReference>
<dbReference type="InterPro" id="IPR020546">
    <property type="entry name" value="ATP_synth_F1_dsu/esu_N"/>
</dbReference>
<dbReference type="InterPro" id="IPR036771">
    <property type="entry name" value="ATPsynth_dsu/esu_N"/>
</dbReference>
<dbReference type="NCBIfam" id="TIGR01216">
    <property type="entry name" value="ATP_synt_epsi"/>
    <property type="match status" value="1"/>
</dbReference>
<dbReference type="NCBIfam" id="NF009979">
    <property type="entry name" value="PRK13444.1"/>
    <property type="match status" value="1"/>
</dbReference>
<dbReference type="PANTHER" id="PTHR13822">
    <property type="entry name" value="ATP SYNTHASE DELTA/EPSILON CHAIN"/>
    <property type="match status" value="1"/>
</dbReference>
<dbReference type="PANTHER" id="PTHR13822:SF10">
    <property type="entry name" value="ATP SYNTHASE EPSILON CHAIN, CHLOROPLASTIC"/>
    <property type="match status" value="1"/>
</dbReference>
<dbReference type="Pfam" id="PF02823">
    <property type="entry name" value="ATP-synt_DE_N"/>
    <property type="match status" value="1"/>
</dbReference>
<dbReference type="SUPFAM" id="SSF51344">
    <property type="entry name" value="Epsilon subunit of F1F0-ATP synthase N-terminal domain"/>
    <property type="match status" value="1"/>
</dbReference>
<evidence type="ECO:0000255" key="1">
    <source>
        <dbReference type="HAMAP-Rule" id="MF_00530"/>
    </source>
</evidence>
<name>ATPE_LEPBJ</name>
<accession>Q04S19</accession>
<comment type="function">
    <text evidence="1">Produces ATP from ADP in the presence of a proton gradient across the membrane.</text>
</comment>
<comment type="subunit">
    <text evidence="1">F-type ATPases have 2 components, CF(1) - the catalytic core - and CF(0) - the membrane proton channel. CF(1) has five subunits: alpha(3), beta(3), gamma(1), delta(1), epsilon(1). CF(0) has three main subunits: a, b and c.</text>
</comment>
<comment type="subcellular location">
    <subcellularLocation>
        <location evidence="1">Cell inner membrane</location>
        <topology evidence="1">Peripheral membrane protein</topology>
    </subcellularLocation>
</comment>
<comment type="similarity">
    <text evidence="1">Belongs to the ATPase epsilon chain family.</text>
</comment>
<organism>
    <name type="scientific">Leptospira borgpetersenii serovar Hardjo-bovis (strain JB197)</name>
    <dbReference type="NCBI Taxonomy" id="355277"/>
    <lineage>
        <taxon>Bacteria</taxon>
        <taxon>Pseudomonadati</taxon>
        <taxon>Spirochaetota</taxon>
        <taxon>Spirochaetia</taxon>
        <taxon>Leptospirales</taxon>
        <taxon>Leptospiraceae</taxon>
        <taxon>Leptospira</taxon>
    </lineage>
</organism>
<gene>
    <name evidence="1" type="primary">atpC</name>
    <name type="ordered locus">LBJ_1751</name>
</gene>